<feature type="chain" id="PRO_0000317933" description="Ubiquitin-like protein ATG12">
    <location>
        <begin position="1"/>
        <end position="182"/>
    </location>
</feature>
<feature type="region of interest" description="Disordered" evidence="2">
    <location>
        <begin position="1"/>
        <end position="63"/>
    </location>
</feature>
<feature type="compositionally biased region" description="Low complexity" evidence="2">
    <location>
        <begin position="10"/>
        <end position="22"/>
    </location>
</feature>
<feature type="compositionally biased region" description="Polar residues" evidence="2">
    <location>
        <begin position="23"/>
        <end position="34"/>
    </location>
</feature>
<feature type="cross-link" description="Glycyl lysine isopeptide (Gly-Lys) (interchain with K-186 in ATG5)" evidence="1">
    <location>
        <position position="182"/>
    </location>
</feature>
<gene>
    <name type="primary">ATG12</name>
    <name type="ORF">CIMG_01191</name>
</gene>
<accession>Q1E8C2</accession>
<accession>A0A0D6K9Q0</accession>
<accession>J3KIV2</accession>
<reference key="1">
    <citation type="journal article" date="2009" name="Genome Res.">
        <title>Comparative genomic analyses of the human fungal pathogens Coccidioides and their relatives.</title>
        <authorList>
            <person name="Sharpton T.J."/>
            <person name="Stajich J.E."/>
            <person name="Rounsley S.D."/>
            <person name="Gardner M.J."/>
            <person name="Wortman J.R."/>
            <person name="Jordar V.S."/>
            <person name="Maiti R."/>
            <person name="Kodira C.D."/>
            <person name="Neafsey D.E."/>
            <person name="Zeng Q."/>
            <person name="Hung C.-Y."/>
            <person name="McMahan C."/>
            <person name="Muszewska A."/>
            <person name="Grynberg M."/>
            <person name="Mandel M.A."/>
            <person name="Kellner E.M."/>
            <person name="Barker B.M."/>
            <person name="Galgiani J.N."/>
            <person name="Orbach M.J."/>
            <person name="Kirkland T.N."/>
            <person name="Cole G.T."/>
            <person name="Henn M.R."/>
            <person name="Birren B.W."/>
            <person name="Taylor J.W."/>
        </authorList>
    </citation>
    <scope>NUCLEOTIDE SEQUENCE [LARGE SCALE GENOMIC DNA]</scope>
    <source>
        <strain>RS</strain>
    </source>
</reference>
<reference key="2">
    <citation type="journal article" date="2010" name="Genome Res.">
        <title>Population genomic sequencing of Coccidioides fungi reveals recent hybridization and transposon control.</title>
        <authorList>
            <person name="Neafsey D.E."/>
            <person name="Barker B.M."/>
            <person name="Sharpton T.J."/>
            <person name="Stajich J.E."/>
            <person name="Park D.J."/>
            <person name="Whiston E."/>
            <person name="Hung C.-Y."/>
            <person name="McMahan C."/>
            <person name="White J."/>
            <person name="Sykes S."/>
            <person name="Heiman D."/>
            <person name="Young S."/>
            <person name="Zeng Q."/>
            <person name="Abouelleil A."/>
            <person name="Aftuck L."/>
            <person name="Bessette D."/>
            <person name="Brown A."/>
            <person name="FitzGerald M."/>
            <person name="Lui A."/>
            <person name="Macdonald J.P."/>
            <person name="Priest M."/>
            <person name="Orbach M.J."/>
            <person name="Galgiani J.N."/>
            <person name="Kirkland T.N."/>
            <person name="Cole G.T."/>
            <person name="Birren B.W."/>
            <person name="Henn M.R."/>
            <person name="Taylor J.W."/>
            <person name="Rounsley S.D."/>
        </authorList>
    </citation>
    <scope>GENOME REANNOTATION</scope>
    <source>
        <strain>RS</strain>
    </source>
</reference>
<name>ATG12_COCIM</name>
<organism>
    <name type="scientific">Coccidioides immitis (strain RS)</name>
    <name type="common">Valley fever fungus</name>
    <dbReference type="NCBI Taxonomy" id="246410"/>
    <lineage>
        <taxon>Eukaryota</taxon>
        <taxon>Fungi</taxon>
        <taxon>Dikarya</taxon>
        <taxon>Ascomycota</taxon>
        <taxon>Pezizomycotina</taxon>
        <taxon>Eurotiomycetes</taxon>
        <taxon>Eurotiomycetidae</taxon>
        <taxon>Onygenales</taxon>
        <taxon>Onygenaceae</taxon>
        <taxon>Coccidioides</taxon>
    </lineage>
</organism>
<proteinExistence type="inferred from homology"/>
<dbReference type="EMBL" id="GG704911">
    <property type="protein sequence ID" value="EAS35837.1"/>
    <property type="molecule type" value="Genomic_DNA"/>
</dbReference>
<dbReference type="RefSeq" id="XP_001247420.1">
    <property type="nucleotide sequence ID" value="XM_001247419.2"/>
</dbReference>
<dbReference type="SMR" id="Q1E8C2"/>
<dbReference type="FunCoup" id="Q1E8C2">
    <property type="interactions" value="157"/>
</dbReference>
<dbReference type="STRING" id="246410.Q1E8C2"/>
<dbReference type="GeneID" id="4568101"/>
<dbReference type="KEGG" id="cim:CIMG_01191"/>
<dbReference type="VEuPathDB" id="FungiDB:CIMG_01191"/>
<dbReference type="InParanoid" id="Q1E8C2"/>
<dbReference type="OMA" id="DLPMNMS"/>
<dbReference type="OrthoDB" id="10003551at2759"/>
<dbReference type="Proteomes" id="UP000001261">
    <property type="component" value="Unassembled WGS sequence"/>
</dbReference>
<dbReference type="GO" id="GO:0034274">
    <property type="term" value="C:Atg12-Atg5-Atg16 complex"/>
    <property type="evidence" value="ECO:0007669"/>
    <property type="project" value="TreeGrafter"/>
</dbReference>
<dbReference type="GO" id="GO:0000421">
    <property type="term" value="C:autophagosome membrane"/>
    <property type="evidence" value="ECO:0007669"/>
    <property type="project" value="TreeGrafter"/>
</dbReference>
<dbReference type="GO" id="GO:0034045">
    <property type="term" value="C:phagophore assembly site membrane"/>
    <property type="evidence" value="ECO:0007669"/>
    <property type="project" value="UniProtKB-SubCell"/>
</dbReference>
<dbReference type="GO" id="GO:0019776">
    <property type="term" value="F:Atg8-family ligase activity"/>
    <property type="evidence" value="ECO:0007669"/>
    <property type="project" value="TreeGrafter"/>
</dbReference>
<dbReference type="GO" id="GO:0000045">
    <property type="term" value="P:autophagosome assembly"/>
    <property type="evidence" value="ECO:0007669"/>
    <property type="project" value="InterPro"/>
</dbReference>
<dbReference type="GO" id="GO:0097352">
    <property type="term" value="P:autophagosome maturation"/>
    <property type="evidence" value="ECO:0007669"/>
    <property type="project" value="TreeGrafter"/>
</dbReference>
<dbReference type="GO" id="GO:0000422">
    <property type="term" value="P:autophagy of mitochondrion"/>
    <property type="evidence" value="ECO:0007669"/>
    <property type="project" value="TreeGrafter"/>
</dbReference>
<dbReference type="GO" id="GO:0061723">
    <property type="term" value="P:glycophagy"/>
    <property type="evidence" value="ECO:0007669"/>
    <property type="project" value="TreeGrafter"/>
</dbReference>
<dbReference type="GO" id="GO:0034727">
    <property type="term" value="P:piecemeal microautophagy of the nucleus"/>
    <property type="evidence" value="ECO:0007669"/>
    <property type="project" value="TreeGrafter"/>
</dbReference>
<dbReference type="GO" id="GO:0015031">
    <property type="term" value="P:protein transport"/>
    <property type="evidence" value="ECO:0007669"/>
    <property type="project" value="UniProtKB-KW"/>
</dbReference>
<dbReference type="CDD" id="cd01612">
    <property type="entry name" value="Ubl_ATG12"/>
    <property type="match status" value="1"/>
</dbReference>
<dbReference type="FunFam" id="3.10.20.90:FF:000148">
    <property type="entry name" value="Ubiquitin-like protein ATG12"/>
    <property type="match status" value="1"/>
</dbReference>
<dbReference type="Gene3D" id="3.10.20.90">
    <property type="entry name" value="Phosphatidylinositol 3-kinase Catalytic Subunit, Chain A, domain 1"/>
    <property type="match status" value="1"/>
</dbReference>
<dbReference type="InterPro" id="IPR007242">
    <property type="entry name" value="Atg12"/>
</dbReference>
<dbReference type="InterPro" id="IPR029071">
    <property type="entry name" value="Ubiquitin-like_domsf"/>
</dbReference>
<dbReference type="PANTHER" id="PTHR13385">
    <property type="entry name" value="AUTOPHAGY PROTEIN 12"/>
    <property type="match status" value="1"/>
</dbReference>
<dbReference type="PANTHER" id="PTHR13385:SF0">
    <property type="entry name" value="UBIQUITIN-LIKE PROTEIN ATG12"/>
    <property type="match status" value="1"/>
</dbReference>
<dbReference type="Pfam" id="PF04110">
    <property type="entry name" value="APG12"/>
    <property type="match status" value="1"/>
</dbReference>
<dbReference type="SUPFAM" id="SSF54236">
    <property type="entry name" value="Ubiquitin-like"/>
    <property type="match status" value="1"/>
</dbReference>
<comment type="function">
    <text evidence="1">Ubiquitin-like protein involved in cytoplasm to vacuole transport (Cvt), autophagy vesicles formation, mitophagy, and nucleophagy. Conjugation with ATG5 through a ubiquitin-like conjugating system involving also ATG7 as an E1-like activating enzyme and ATG10 as an E2-like conjugating enzyme, is essential for its function. The ATG12-ATG5 conjugate functions as an E3-like enzyme which is required for lipidation of ATG8 and ATG8 association to the vesicle membranes (By similarity).</text>
</comment>
<comment type="subunit">
    <text evidence="1">Forms a conjugate with ATG5.</text>
</comment>
<comment type="subcellular location">
    <subcellularLocation>
        <location evidence="1">Preautophagosomal structure membrane</location>
        <topology evidence="1">Peripheral membrane protein</topology>
    </subcellularLocation>
</comment>
<comment type="similarity">
    <text evidence="3">Belongs to the ATG12 family.</text>
</comment>
<evidence type="ECO:0000250" key="1"/>
<evidence type="ECO:0000256" key="2">
    <source>
        <dbReference type="SAM" id="MobiDB-lite"/>
    </source>
</evidence>
<evidence type="ECO:0000305" key="3"/>
<sequence length="182" mass="19510">MSATPPIPSPGSSKPSSPRSASRNLGLNTRQASRPQIGARRDTNNGSESPAATAPIPDEDHGAELPLTMTASVILTGLPKDAHRALADVEAIDAGKVTVRFHPLPSAPILRNRVFKISASQKFETVVRFLRKKLDCSESDSVFCYVNSVFAPGLDESVGGLWRCFKTDDQLIVSYSMTPAFG</sequence>
<keyword id="KW-0072">Autophagy</keyword>
<keyword id="KW-1017">Isopeptide bond</keyword>
<keyword id="KW-0472">Membrane</keyword>
<keyword id="KW-0653">Protein transport</keyword>
<keyword id="KW-1185">Reference proteome</keyword>
<keyword id="KW-0813">Transport</keyword>
<keyword id="KW-0833">Ubl conjugation pathway</keyword>
<protein>
    <recommendedName>
        <fullName>Ubiquitin-like protein ATG12</fullName>
    </recommendedName>
    <alternativeName>
        <fullName>Autophagy-related protein 12</fullName>
    </alternativeName>
</protein>